<feature type="transit peptide" description="Mitochondrion" evidence="2">
    <location>
        <begin position="1"/>
        <end position="36"/>
    </location>
</feature>
<feature type="chain" id="PRO_0000405484" description="Mitochondrial zinc maintenance protein 1, mitochondrial">
    <location>
        <begin position="37"/>
        <end position="115"/>
    </location>
</feature>
<dbReference type="EMBL" id="AM270315">
    <property type="protein sequence ID" value="CAK46470.1"/>
    <property type="molecule type" value="Genomic_DNA"/>
</dbReference>
<dbReference type="RefSeq" id="XP_001400784.1">
    <property type="nucleotide sequence ID" value="XM_001400747.1"/>
</dbReference>
<dbReference type="SMR" id="A2R2Q4"/>
<dbReference type="EnsemblFungi" id="CAK46470">
    <property type="protein sequence ID" value="CAK46470"/>
    <property type="gene ID" value="An14g01570"/>
</dbReference>
<dbReference type="GeneID" id="4987012"/>
<dbReference type="KEGG" id="ang:An14g01570"/>
<dbReference type="VEuPathDB" id="FungiDB:An14g01570"/>
<dbReference type="HOGENOM" id="CLU_147114_2_0_1"/>
<dbReference type="Proteomes" id="UP000006706">
    <property type="component" value="Chromosome 1R"/>
</dbReference>
<dbReference type="GO" id="GO:0005759">
    <property type="term" value="C:mitochondrial matrix"/>
    <property type="evidence" value="ECO:0007669"/>
    <property type="project" value="UniProtKB-SubCell"/>
</dbReference>
<dbReference type="GO" id="GO:0044183">
    <property type="term" value="F:protein folding chaperone"/>
    <property type="evidence" value="ECO:0007669"/>
    <property type="project" value="TreeGrafter"/>
</dbReference>
<dbReference type="GO" id="GO:0034551">
    <property type="term" value="P:mitochondrial respiratory chain complex III assembly"/>
    <property type="evidence" value="ECO:0007669"/>
    <property type="project" value="InterPro"/>
</dbReference>
<dbReference type="CDD" id="cd20267">
    <property type="entry name" value="Complex1_LYR_LYRM7"/>
    <property type="match status" value="1"/>
</dbReference>
<dbReference type="InterPro" id="IPR045298">
    <property type="entry name" value="Complex1_LYR_LYRM7"/>
</dbReference>
<dbReference type="InterPro" id="IPR050435">
    <property type="entry name" value="MZM1/LYRM7"/>
</dbReference>
<dbReference type="PANTHER" id="PTHR46749">
    <property type="entry name" value="COMPLEX III ASSEMBLY FACTOR LYRM7"/>
    <property type="match status" value="1"/>
</dbReference>
<dbReference type="PANTHER" id="PTHR46749:SF1">
    <property type="entry name" value="COMPLEX III ASSEMBLY FACTOR LYRM7"/>
    <property type="match status" value="1"/>
</dbReference>
<proteinExistence type="inferred from homology"/>
<evidence type="ECO:0000250" key="1"/>
<evidence type="ECO:0000255" key="2"/>
<evidence type="ECO:0000305" key="3"/>
<keyword id="KW-0143">Chaperone</keyword>
<keyword id="KW-0496">Mitochondrion</keyword>
<keyword id="KW-1185">Reference proteome</keyword>
<keyword id="KW-0809">Transit peptide</keyword>
<reference key="1">
    <citation type="journal article" date="2007" name="Nat. Biotechnol.">
        <title>Genome sequencing and analysis of the versatile cell factory Aspergillus niger CBS 513.88.</title>
        <authorList>
            <person name="Pel H.J."/>
            <person name="de Winde J.H."/>
            <person name="Archer D.B."/>
            <person name="Dyer P.S."/>
            <person name="Hofmann G."/>
            <person name="Schaap P.J."/>
            <person name="Turner G."/>
            <person name="de Vries R.P."/>
            <person name="Albang R."/>
            <person name="Albermann K."/>
            <person name="Andersen M.R."/>
            <person name="Bendtsen J.D."/>
            <person name="Benen J.A.E."/>
            <person name="van den Berg M."/>
            <person name="Breestraat S."/>
            <person name="Caddick M.X."/>
            <person name="Contreras R."/>
            <person name="Cornell M."/>
            <person name="Coutinho P.M."/>
            <person name="Danchin E.G.J."/>
            <person name="Debets A.J.M."/>
            <person name="Dekker P."/>
            <person name="van Dijck P.W.M."/>
            <person name="van Dijk A."/>
            <person name="Dijkhuizen L."/>
            <person name="Driessen A.J.M."/>
            <person name="d'Enfert C."/>
            <person name="Geysens S."/>
            <person name="Goosen C."/>
            <person name="Groot G.S.P."/>
            <person name="de Groot P.W.J."/>
            <person name="Guillemette T."/>
            <person name="Henrissat B."/>
            <person name="Herweijer M."/>
            <person name="van den Hombergh J.P.T.W."/>
            <person name="van den Hondel C.A.M.J.J."/>
            <person name="van der Heijden R.T.J.M."/>
            <person name="van der Kaaij R.M."/>
            <person name="Klis F.M."/>
            <person name="Kools H.J."/>
            <person name="Kubicek C.P."/>
            <person name="van Kuyk P.A."/>
            <person name="Lauber J."/>
            <person name="Lu X."/>
            <person name="van der Maarel M.J.E.C."/>
            <person name="Meulenberg R."/>
            <person name="Menke H."/>
            <person name="Mortimer M.A."/>
            <person name="Nielsen J."/>
            <person name="Oliver S.G."/>
            <person name="Olsthoorn M."/>
            <person name="Pal K."/>
            <person name="van Peij N.N.M.E."/>
            <person name="Ram A.F.J."/>
            <person name="Rinas U."/>
            <person name="Roubos J.A."/>
            <person name="Sagt C.M.J."/>
            <person name="Schmoll M."/>
            <person name="Sun J."/>
            <person name="Ussery D."/>
            <person name="Varga J."/>
            <person name="Vervecken W."/>
            <person name="van de Vondervoort P.J.J."/>
            <person name="Wedler H."/>
            <person name="Woesten H.A.B."/>
            <person name="Zeng A.-P."/>
            <person name="van Ooyen A.J.J."/>
            <person name="Visser J."/>
            <person name="Stam H."/>
        </authorList>
    </citation>
    <scope>NUCLEOTIDE SEQUENCE [LARGE SCALE GENOMIC DNA]</scope>
    <source>
        <strain>ATCC MYA-4892 / CBS 513.88 / FGSC A1513</strain>
    </source>
</reference>
<name>MZM1_ASPNC</name>
<gene>
    <name type="primary">MZM1</name>
    <name type="ORF">An14g01570</name>
</gene>
<sequence>MASQTALSARSAYRQLLRATRIAFQDDVRVMIAARQEARRNFDSHRREGIDTPMQINHALEVANILRHNIVQGVREQDDENAKWELRIHDDIERGDNDTIRVKGKTVKVDKACSS</sequence>
<accession>A2R2Q4</accession>
<comment type="function">
    <text evidence="1">Assembly factor required for Rieske Fe-S protein RIP1 incorporation into the cytochrome b-c1 (CIII) complex. Functions as a chaperone, binding to this subunit within the mitochondrial matrix and stabilizing it prior to its translocation and insertion into the late CIII dimeric intermediate within the mitochondrial inner membrane. Modulates the mitochondrial matrix zinc pool (By similarity).</text>
</comment>
<comment type="subunit">
    <text evidence="1">Interacts with RIP1.</text>
</comment>
<comment type="subcellular location">
    <subcellularLocation>
        <location evidence="1">Mitochondrion matrix</location>
    </subcellularLocation>
</comment>
<comment type="similarity">
    <text evidence="3">Belongs to the complex I LYR family. MZM1 subfamily.</text>
</comment>
<protein>
    <recommendedName>
        <fullName>Mitochondrial zinc maintenance protein 1, mitochondrial</fullName>
    </recommendedName>
</protein>
<organism>
    <name type="scientific">Aspergillus niger (strain ATCC MYA-4892 / CBS 513.88 / FGSC A1513)</name>
    <dbReference type="NCBI Taxonomy" id="425011"/>
    <lineage>
        <taxon>Eukaryota</taxon>
        <taxon>Fungi</taxon>
        <taxon>Dikarya</taxon>
        <taxon>Ascomycota</taxon>
        <taxon>Pezizomycotina</taxon>
        <taxon>Eurotiomycetes</taxon>
        <taxon>Eurotiomycetidae</taxon>
        <taxon>Eurotiales</taxon>
        <taxon>Aspergillaceae</taxon>
        <taxon>Aspergillus</taxon>
        <taxon>Aspergillus subgen. Circumdati</taxon>
    </lineage>
</organism>